<dbReference type="EC" id="2.1.1.228" evidence="1"/>
<dbReference type="EMBL" id="BX950851">
    <property type="protein sequence ID" value="CAG76255.1"/>
    <property type="molecule type" value="Genomic_DNA"/>
</dbReference>
<dbReference type="RefSeq" id="WP_011094870.1">
    <property type="nucleotide sequence ID" value="NC_004547.2"/>
</dbReference>
<dbReference type="SMR" id="Q6D1U0"/>
<dbReference type="STRING" id="218491.ECA3357"/>
<dbReference type="GeneID" id="57210052"/>
<dbReference type="KEGG" id="eca:ECA3357"/>
<dbReference type="PATRIC" id="fig|218491.5.peg.3408"/>
<dbReference type="eggNOG" id="COG0336">
    <property type="taxonomic scope" value="Bacteria"/>
</dbReference>
<dbReference type="HOGENOM" id="CLU_047363_0_1_6"/>
<dbReference type="OrthoDB" id="9807416at2"/>
<dbReference type="Proteomes" id="UP000007966">
    <property type="component" value="Chromosome"/>
</dbReference>
<dbReference type="GO" id="GO:0005829">
    <property type="term" value="C:cytosol"/>
    <property type="evidence" value="ECO:0007669"/>
    <property type="project" value="TreeGrafter"/>
</dbReference>
<dbReference type="GO" id="GO:0052906">
    <property type="term" value="F:tRNA (guanine(37)-N1)-methyltransferase activity"/>
    <property type="evidence" value="ECO:0007669"/>
    <property type="project" value="UniProtKB-UniRule"/>
</dbReference>
<dbReference type="GO" id="GO:0002939">
    <property type="term" value="P:tRNA N1-guanine methylation"/>
    <property type="evidence" value="ECO:0007669"/>
    <property type="project" value="TreeGrafter"/>
</dbReference>
<dbReference type="CDD" id="cd18080">
    <property type="entry name" value="TrmD-like"/>
    <property type="match status" value="1"/>
</dbReference>
<dbReference type="FunFam" id="1.10.1270.20:FF:000001">
    <property type="entry name" value="tRNA (guanine-N(1)-)-methyltransferase"/>
    <property type="match status" value="1"/>
</dbReference>
<dbReference type="FunFam" id="3.40.1280.10:FF:000001">
    <property type="entry name" value="tRNA (guanine-N(1)-)-methyltransferase"/>
    <property type="match status" value="1"/>
</dbReference>
<dbReference type="Gene3D" id="3.40.1280.10">
    <property type="match status" value="1"/>
</dbReference>
<dbReference type="Gene3D" id="1.10.1270.20">
    <property type="entry name" value="tRNA(m1g37)methyltransferase, domain 2"/>
    <property type="match status" value="1"/>
</dbReference>
<dbReference type="HAMAP" id="MF_00605">
    <property type="entry name" value="TrmD"/>
    <property type="match status" value="1"/>
</dbReference>
<dbReference type="InterPro" id="IPR029028">
    <property type="entry name" value="Alpha/beta_knot_MTases"/>
</dbReference>
<dbReference type="InterPro" id="IPR023148">
    <property type="entry name" value="tRNA_m1G_MeTrfase_C_sf"/>
</dbReference>
<dbReference type="InterPro" id="IPR002649">
    <property type="entry name" value="tRNA_m1G_MeTrfase_TrmD"/>
</dbReference>
<dbReference type="InterPro" id="IPR029026">
    <property type="entry name" value="tRNA_m1G_MTases_N"/>
</dbReference>
<dbReference type="InterPro" id="IPR016009">
    <property type="entry name" value="tRNA_MeTrfase_TRMD/TRM10"/>
</dbReference>
<dbReference type="NCBIfam" id="NF000648">
    <property type="entry name" value="PRK00026.1"/>
    <property type="match status" value="1"/>
</dbReference>
<dbReference type="NCBIfam" id="TIGR00088">
    <property type="entry name" value="trmD"/>
    <property type="match status" value="1"/>
</dbReference>
<dbReference type="PANTHER" id="PTHR46417">
    <property type="entry name" value="TRNA (GUANINE-N(1)-)-METHYLTRANSFERASE"/>
    <property type="match status" value="1"/>
</dbReference>
<dbReference type="PANTHER" id="PTHR46417:SF1">
    <property type="entry name" value="TRNA (GUANINE-N(1)-)-METHYLTRANSFERASE"/>
    <property type="match status" value="1"/>
</dbReference>
<dbReference type="Pfam" id="PF01746">
    <property type="entry name" value="tRNA_m1G_MT"/>
    <property type="match status" value="1"/>
</dbReference>
<dbReference type="PIRSF" id="PIRSF000386">
    <property type="entry name" value="tRNA_mtase"/>
    <property type="match status" value="1"/>
</dbReference>
<dbReference type="SUPFAM" id="SSF75217">
    <property type="entry name" value="alpha/beta knot"/>
    <property type="match status" value="1"/>
</dbReference>
<keyword id="KW-0963">Cytoplasm</keyword>
<keyword id="KW-0489">Methyltransferase</keyword>
<keyword id="KW-1185">Reference proteome</keyword>
<keyword id="KW-0949">S-adenosyl-L-methionine</keyword>
<keyword id="KW-0808">Transferase</keyword>
<keyword id="KW-0819">tRNA processing</keyword>
<comment type="function">
    <text evidence="1">Specifically methylates guanosine-37 in various tRNAs.</text>
</comment>
<comment type="catalytic activity">
    <reaction evidence="1">
        <text>guanosine(37) in tRNA + S-adenosyl-L-methionine = N(1)-methylguanosine(37) in tRNA + S-adenosyl-L-homocysteine + H(+)</text>
        <dbReference type="Rhea" id="RHEA:36899"/>
        <dbReference type="Rhea" id="RHEA-COMP:10145"/>
        <dbReference type="Rhea" id="RHEA-COMP:10147"/>
        <dbReference type="ChEBI" id="CHEBI:15378"/>
        <dbReference type="ChEBI" id="CHEBI:57856"/>
        <dbReference type="ChEBI" id="CHEBI:59789"/>
        <dbReference type="ChEBI" id="CHEBI:73542"/>
        <dbReference type="ChEBI" id="CHEBI:74269"/>
        <dbReference type="EC" id="2.1.1.228"/>
    </reaction>
</comment>
<comment type="subunit">
    <text evidence="1">Homodimer.</text>
</comment>
<comment type="subcellular location">
    <subcellularLocation>
        <location evidence="1">Cytoplasm</location>
    </subcellularLocation>
</comment>
<comment type="similarity">
    <text evidence="1">Belongs to the RNA methyltransferase TrmD family.</text>
</comment>
<reference key="1">
    <citation type="journal article" date="2004" name="Proc. Natl. Acad. Sci. U.S.A.">
        <title>Genome sequence of the enterobacterial phytopathogen Erwinia carotovora subsp. atroseptica and characterization of virulence factors.</title>
        <authorList>
            <person name="Bell K.S."/>
            <person name="Sebaihia M."/>
            <person name="Pritchard L."/>
            <person name="Holden M.T.G."/>
            <person name="Hyman L.J."/>
            <person name="Holeva M.C."/>
            <person name="Thomson N.R."/>
            <person name="Bentley S.D."/>
            <person name="Churcher L.J.C."/>
            <person name="Mungall K."/>
            <person name="Atkin R."/>
            <person name="Bason N."/>
            <person name="Brooks K."/>
            <person name="Chillingworth T."/>
            <person name="Clark K."/>
            <person name="Doggett J."/>
            <person name="Fraser A."/>
            <person name="Hance Z."/>
            <person name="Hauser H."/>
            <person name="Jagels K."/>
            <person name="Moule S."/>
            <person name="Norbertczak H."/>
            <person name="Ormond D."/>
            <person name="Price C."/>
            <person name="Quail M.A."/>
            <person name="Sanders M."/>
            <person name="Walker D."/>
            <person name="Whitehead S."/>
            <person name="Salmond G.P.C."/>
            <person name="Birch P.R.J."/>
            <person name="Parkhill J."/>
            <person name="Toth I.K."/>
        </authorList>
    </citation>
    <scope>NUCLEOTIDE SEQUENCE [LARGE SCALE GENOMIC DNA]</scope>
    <source>
        <strain>SCRI 1043 / ATCC BAA-672</strain>
    </source>
</reference>
<sequence>MWIGVISLFPEMFRAITDFGVTGRAVKNGLLNVQYWSPRDFTYDRHRTVDDRPYGGGPGMLMMVQPLRDAIHAAKAAAGEGARVIYLSPQGRKLDQQGVRQLATNQKMILVCGRYEGIDERVIKTEIDEEWSIGDYVLSGGELPAMTLIDSVARFIPGVLGHQASAEEDSFADGLLDCPHFTRPEILESMDVPAVLLSGNHAEIRRWRLKQSLGRTWLRRPELLKSLALTDEQTRLLAEFQREYQSEQQEY</sequence>
<proteinExistence type="inferred from homology"/>
<evidence type="ECO:0000255" key="1">
    <source>
        <dbReference type="HAMAP-Rule" id="MF_00605"/>
    </source>
</evidence>
<name>TRMD_PECAS</name>
<gene>
    <name evidence="1" type="primary">trmD</name>
    <name type="ordered locus">ECA3357</name>
</gene>
<protein>
    <recommendedName>
        <fullName evidence="1">tRNA (guanine-N(1)-)-methyltransferase</fullName>
        <ecNumber evidence="1">2.1.1.228</ecNumber>
    </recommendedName>
    <alternativeName>
        <fullName evidence="1">M1G-methyltransferase</fullName>
    </alternativeName>
    <alternativeName>
        <fullName evidence="1">tRNA [GM37] methyltransferase</fullName>
    </alternativeName>
</protein>
<feature type="chain" id="PRO_0000060374" description="tRNA (guanine-N(1)-)-methyltransferase">
    <location>
        <begin position="1"/>
        <end position="251"/>
    </location>
</feature>
<feature type="binding site" evidence="1">
    <location>
        <position position="113"/>
    </location>
    <ligand>
        <name>S-adenosyl-L-methionine</name>
        <dbReference type="ChEBI" id="CHEBI:59789"/>
    </ligand>
</feature>
<feature type="binding site" evidence="1">
    <location>
        <begin position="133"/>
        <end position="138"/>
    </location>
    <ligand>
        <name>S-adenosyl-L-methionine</name>
        <dbReference type="ChEBI" id="CHEBI:59789"/>
    </ligand>
</feature>
<organism>
    <name type="scientific">Pectobacterium atrosepticum (strain SCRI 1043 / ATCC BAA-672)</name>
    <name type="common">Erwinia carotovora subsp. atroseptica</name>
    <dbReference type="NCBI Taxonomy" id="218491"/>
    <lineage>
        <taxon>Bacteria</taxon>
        <taxon>Pseudomonadati</taxon>
        <taxon>Pseudomonadota</taxon>
        <taxon>Gammaproteobacteria</taxon>
        <taxon>Enterobacterales</taxon>
        <taxon>Pectobacteriaceae</taxon>
        <taxon>Pectobacterium</taxon>
    </lineage>
</organism>
<accession>Q6D1U0</accession>